<proteinExistence type="inferred from homology"/>
<sequence>MNLLLLNGPNLNLLGKREPSIYGSQSLESIEISLSQRAKEEGVGLECFQSNSEGTLVDYIHQSIGKVDAILINAGAYTHTSIALRDALLSAEIPYVELHLSNTYARETFRQKSLLADRAIGVVSGFGVMSYQLAFQGILDYLRNRSKE</sequence>
<reference key="1">
    <citation type="journal article" date="2007" name="PLoS Genet.">
        <title>Patterns and implications of gene gain and loss in the evolution of Prochlorococcus.</title>
        <authorList>
            <person name="Kettler G.C."/>
            <person name="Martiny A.C."/>
            <person name="Huang K."/>
            <person name="Zucker J."/>
            <person name="Coleman M.L."/>
            <person name="Rodrigue S."/>
            <person name="Chen F."/>
            <person name="Lapidus A."/>
            <person name="Ferriera S."/>
            <person name="Johnson J."/>
            <person name="Steglich C."/>
            <person name="Church G.M."/>
            <person name="Richardson P."/>
            <person name="Chisholm S.W."/>
        </authorList>
    </citation>
    <scope>NUCLEOTIDE SEQUENCE [LARGE SCALE GENOMIC DNA]</scope>
    <source>
        <strain>MIT 9211</strain>
    </source>
</reference>
<protein>
    <recommendedName>
        <fullName evidence="1">3-dehydroquinate dehydratase</fullName>
        <shortName evidence="1">3-dehydroquinase</shortName>
        <ecNumber evidence="1">4.2.1.10</ecNumber>
    </recommendedName>
    <alternativeName>
        <fullName evidence="1">Type II DHQase</fullName>
    </alternativeName>
</protein>
<gene>
    <name evidence="1" type="primary">aroQ</name>
    <name type="ordered locus">P9211_03831</name>
</gene>
<comment type="function">
    <text evidence="1">Catalyzes a trans-dehydration via an enolate intermediate.</text>
</comment>
<comment type="catalytic activity">
    <reaction evidence="1">
        <text>3-dehydroquinate = 3-dehydroshikimate + H2O</text>
        <dbReference type="Rhea" id="RHEA:21096"/>
        <dbReference type="ChEBI" id="CHEBI:15377"/>
        <dbReference type="ChEBI" id="CHEBI:16630"/>
        <dbReference type="ChEBI" id="CHEBI:32364"/>
        <dbReference type="EC" id="4.2.1.10"/>
    </reaction>
</comment>
<comment type="pathway">
    <text evidence="1">Metabolic intermediate biosynthesis; chorismate biosynthesis; chorismate from D-erythrose 4-phosphate and phosphoenolpyruvate: step 3/7.</text>
</comment>
<comment type="subunit">
    <text evidence="1">Homododecamer.</text>
</comment>
<comment type="similarity">
    <text evidence="1">Belongs to the type-II 3-dehydroquinase family.</text>
</comment>
<keyword id="KW-0028">Amino-acid biosynthesis</keyword>
<keyword id="KW-0057">Aromatic amino acid biosynthesis</keyword>
<keyword id="KW-0456">Lyase</keyword>
<keyword id="KW-1185">Reference proteome</keyword>
<name>AROQ_PROM4</name>
<accession>A9BE04</accession>
<dbReference type="EC" id="4.2.1.10" evidence="1"/>
<dbReference type="EMBL" id="CP000878">
    <property type="protein sequence ID" value="ABX08314.1"/>
    <property type="molecule type" value="Genomic_DNA"/>
</dbReference>
<dbReference type="RefSeq" id="WP_012194937.1">
    <property type="nucleotide sequence ID" value="NC_009976.1"/>
</dbReference>
<dbReference type="SMR" id="A9BE04"/>
<dbReference type="STRING" id="93059.P9211_03831"/>
<dbReference type="KEGG" id="pmj:P9211_03831"/>
<dbReference type="eggNOG" id="COG0757">
    <property type="taxonomic scope" value="Bacteria"/>
</dbReference>
<dbReference type="HOGENOM" id="CLU_090968_1_0_3"/>
<dbReference type="OrthoDB" id="9790793at2"/>
<dbReference type="UniPathway" id="UPA00053">
    <property type="reaction ID" value="UER00086"/>
</dbReference>
<dbReference type="Proteomes" id="UP000000788">
    <property type="component" value="Chromosome"/>
</dbReference>
<dbReference type="GO" id="GO:0003855">
    <property type="term" value="F:3-dehydroquinate dehydratase activity"/>
    <property type="evidence" value="ECO:0007669"/>
    <property type="project" value="UniProtKB-UniRule"/>
</dbReference>
<dbReference type="GO" id="GO:0008652">
    <property type="term" value="P:amino acid biosynthetic process"/>
    <property type="evidence" value="ECO:0007669"/>
    <property type="project" value="UniProtKB-KW"/>
</dbReference>
<dbReference type="GO" id="GO:0009073">
    <property type="term" value="P:aromatic amino acid family biosynthetic process"/>
    <property type="evidence" value="ECO:0007669"/>
    <property type="project" value="UniProtKB-KW"/>
</dbReference>
<dbReference type="GO" id="GO:0009423">
    <property type="term" value="P:chorismate biosynthetic process"/>
    <property type="evidence" value="ECO:0007669"/>
    <property type="project" value="UniProtKB-UniRule"/>
</dbReference>
<dbReference type="GO" id="GO:0019631">
    <property type="term" value="P:quinate catabolic process"/>
    <property type="evidence" value="ECO:0007669"/>
    <property type="project" value="TreeGrafter"/>
</dbReference>
<dbReference type="CDD" id="cd00466">
    <property type="entry name" value="DHQase_II"/>
    <property type="match status" value="1"/>
</dbReference>
<dbReference type="Gene3D" id="3.40.50.9100">
    <property type="entry name" value="Dehydroquinase, class II"/>
    <property type="match status" value="1"/>
</dbReference>
<dbReference type="HAMAP" id="MF_00169">
    <property type="entry name" value="AroQ"/>
    <property type="match status" value="1"/>
</dbReference>
<dbReference type="InterPro" id="IPR001874">
    <property type="entry name" value="DHquinase_II"/>
</dbReference>
<dbReference type="InterPro" id="IPR018509">
    <property type="entry name" value="DHquinase_II_CS"/>
</dbReference>
<dbReference type="InterPro" id="IPR036441">
    <property type="entry name" value="DHquinase_II_sf"/>
</dbReference>
<dbReference type="NCBIfam" id="TIGR01088">
    <property type="entry name" value="aroQ"/>
    <property type="match status" value="1"/>
</dbReference>
<dbReference type="NCBIfam" id="NF003804">
    <property type="entry name" value="PRK05395.1-1"/>
    <property type="match status" value="1"/>
</dbReference>
<dbReference type="NCBIfam" id="NF003805">
    <property type="entry name" value="PRK05395.1-2"/>
    <property type="match status" value="1"/>
</dbReference>
<dbReference type="NCBIfam" id="NF003806">
    <property type="entry name" value="PRK05395.1-3"/>
    <property type="match status" value="1"/>
</dbReference>
<dbReference type="NCBIfam" id="NF003807">
    <property type="entry name" value="PRK05395.1-4"/>
    <property type="match status" value="1"/>
</dbReference>
<dbReference type="PANTHER" id="PTHR21272">
    <property type="entry name" value="CATABOLIC 3-DEHYDROQUINASE"/>
    <property type="match status" value="1"/>
</dbReference>
<dbReference type="PANTHER" id="PTHR21272:SF3">
    <property type="entry name" value="CATABOLIC 3-DEHYDROQUINASE"/>
    <property type="match status" value="1"/>
</dbReference>
<dbReference type="Pfam" id="PF01220">
    <property type="entry name" value="DHquinase_II"/>
    <property type="match status" value="1"/>
</dbReference>
<dbReference type="PIRSF" id="PIRSF001399">
    <property type="entry name" value="DHquinase_II"/>
    <property type="match status" value="1"/>
</dbReference>
<dbReference type="SUPFAM" id="SSF52304">
    <property type="entry name" value="Type II 3-dehydroquinate dehydratase"/>
    <property type="match status" value="1"/>
</dbReference>
<dbReference type="PROSITE" id="PS01029">
    <property type="entry name" value="DEHYDROQUINASE_II"/>
    <property type="match status" value="1"/>
</dbReference>
<organism>
    <name type="scientific">Prochlorococcus marinus (strain MIT 9211)</name>
    <dbReference type="NCBI Taxonomy" id="93059"/>
    <lineage>
        <taxon>Bacteria</taxon>
        <taxon>Bacillati</taxon>
        <taxon>Cyanobacteriota</taxon>
        <taxon>Cyanophyceae</taxon>
        <taxon>Synechococcales</taxon>
        <taxon>Prochlorococcaceae</taxon>
        <taxon>Prochlorococcus</taxon>
    </lineage>
</organism>
<evidence type="ECO:0000255" key="1">
    <source>
        <dbReference type="HAMAP-Rule" id="MF_00169"/>
    </source>
</evidence>
<feature type="chain" id="PRO_1000097614" description="3-dehydroquinate dehydratase">
    <location>
        <begin position="1"/>
        <end position="148"/>
    </location>
</feature>
<feature type="active site" description="Proton acceptor" evidence="1">
    <location>
        <position position="22"/>
    </location>
</feature>
<feature type="active site" description="Proton donor" evidence="1">
    <location>
        <position position="99"/>
    </location>
</feature>
<feature type="binding site" evidence="1">
    <location>
        <position position="73"/>
    </location>
    <ligand>
        <name>substrate</name>
    </ligand>
</feature>
<feature type="binding site" evidence="1">
    <location>
        <position position="79"/>
    </location>
    <ligand>
        <name>substrate</name>
    </ligand>
</feature>
<feature type="binding site" evidence="1">
    <location>
        <position position="86"/>
    </location>
    <ligand>
        <name>substrate</name>
    </ligand>
</feature>
<feature type="binding site" evidence="1">
    <location>
        <begin position="100"/>
        <end position="101"/>
    </location>
    <ligand>
        <name>substrate</name>
    </ligand>
</feature>
<feature type="binding site" evidence="1">
    <location>
        <position position="110"/>
    </location>
    <ligand>
        <name>substrate</name>
    </ligand>
</feature>
<feature type="site" description="Transition state stabilizer" evidence="1">
    <location>
        <position position="17"/>
    </location>
</feature>